<reference key="1">
    <citation type="submission" date="2003-10" db="EMBL/GenBank/DDBJ databases">
        <title>The complete genome sequence of the alkaliphilic Bacillus clausii KSM-K16.</title>
        <authorList>
            <person name="Takaki Y."/>
            <person name="Kageyama Y."/>
            <person name="Shimamura S."/>
            <person name="Suzuki H."/>
            <person name="Nishi S."/>
            <person name="Hatada Y."/>
            <person name="Kawai S."/>
            <person name="Ito S."/>
            <person name="Horikoshi K."/>
        </authorList>
    </citation>
    <scope>NUCLEOTIDE SEQUENCE [LARGE SCALE GENOMIC DNA]</scope>
    <source>
        <strain>KSM-K16</strain>
    </source>
</reference>
<gene>
    <name evidence="1" type="primary">hfq</name>
    <name type="ordered locus">ABC2183</name>
</gene>
<protein>
    <recommendedName>
        <fullName evidence="1">RNA-binding protein Hfq</fullName>
    </recommendedName>
</protein>
<organism>
    <name type="scientific">Shouchella clausii (strain KSM-K16)</name>
    <name type="common">Alkalihalobacillus clausii</name>
    <dbReference type="NCBI Taxonomy" id="66692"/>
    <lineage>
        <taxon>Bacteria</taxon>
        <taxon>Bacillati</taxon>
        <taxon>Bacillota</taxon>
        <taxon>Bacilli</taxon>
        <taxon>Bacillales</taxon>
        <taxon>Bacillaceae</taxon>
        <taxon>Shouchella</taxon>
    </lineage>
</organism>
<evidence type="ECO:0000255" key="1">
    <source>
        <dbReference type="HAMAP-Rule" id="MF_00436"/>
    </source>
</evidence>
<evidence type="ECO:0000255" key="2">
    <source>
        <dbReference type="PROSITE-ProRule" id="PRU01346"/>
    </source>
</evidence>
<dbReference type="EMBL" id="AP006627">
    <property type="protein sequence ID" value="BAD64718.1"/>
    <property type="molecule type" value="Genomic_DNA"/>
</dbReference>
<dbReference type="RefSeq" id="WP_011247026.1">
    <property type="nucleotide sequence ID" value="NC_006582.1"/>
</dbReference>
<dbReference type="SMR" id="Q5WFY7"/>
<dbReference type="STRING" id="66692.ABC2183"/>
<dbReference type="GeneID" id="86926333"/>
<dbReference type="KEGG" id="bcl:ABC2183"/>
<dbReference type="eggNOG" id="COG1923">
    <property type="taxonomic scope" value="Bacteria"/>
</dbReference>
<dbReference type="HOGENOM" id="CLU_113688_3_0_9"/>
<dbReference type="OrthoDB" id="9799751at2"/>
<dbReference type="Proteomes" id="UP000001168">
    <property type="component" value="Chromosome"/>
</dbReference>
<dbReference type="GO" id="GO:0005829">
    <property type="term" value="C:cytosol"/>
    <property type="evidence" value="ECO:0007669"/>
    <property type="project" value="TreeGrafter"/>
</dbReference>
<dbReference type="GO" id="GO:0003723">
    <property type="term" value="F:RNA binding"/>
    <property type="evidence" value="ECO:0007669"/>
    <property type="project" value="UniProtKB-UniRule"/>
</dbReference>
<dbReference type="GO" id="GO:0006355">
    <property type="term" value="P:regulation of DNA-templated transcription"/>
    <property type="evidence" value="ECO:0007669"/>
    <property type="project" value="InterPro"/>
</dbReference>
<dbReference type="GO" id="GO:0043487">
    <property type="term" value="P:regulation of RNA stability"/>
    <property type="evidence" value="ECO:0007669"/>
    <property type="project" value="TreeGrafter"/>
</dbReference>
<dbReference type="GO" id="GO:0045974">
    <property type="term" value="P:regulation of translation, ncRNA-mediated"/>
    <property type="evidence" value="ECO:0007669"/>
    <property type="project" value="TreeGrafter"/>
</dbReference>
<dbReference type="CDD" id="cd01716">
    <property type="entry name" value="Hfq"/>
    <property type="match status" value="1"/>
</dbReference>
<dbReference type="FunFam" id="2.30.30.100:FF:000012">
    <property type="entry name" value="RNA-binding protein Hfq"/>
    <property type="match status" value="1"/>
</dbReference>
<dbReference type="Gene3D" id="2.30.30.100">
    <property type="match status" value="1"/>
</dbReference>
<dbReference type="HAMAP" id="MF_00436">
    <property type="entry name" value="Hfq"/>
    <property type="match status" value="1"/>
</dbReference>
<dbReference type="InterPro" id="IPR005001">
    <property type="entry name" value="Hfq"/>
</dbReference>
<dbReference type="InterPro" id="IPR010920">
    <property type="entry name" value="LSM_dom_sf"/>
</dbReference>
<dbReference type="InterPro" id="IPR047575">
    <property type="entry name" value="Sm"/>
</dbReference>
<dbReference type="NCBIfam" id="TIGR02383">
    <property type="entry name" value="Hfq"/>
    <property type="match status" value="1"/>
</dbReference>
<dbReference type="NCBIfam" id="NF001602">
    <property type="entry name" value="PRK00395.1"/>
    <property type="match status" value="1"/>
</dbReference>
<dbReference type="PANTHER" id="PTHR34772">
    <property type="entry name" value="RNA-BINDING PROTEIN HFQ"/>
    <property type="match status" value="1"/>
</dbReference>
<dbReference type="PANTHER" id="PTHR34772:SF1">
    <property type="entry name" value="RNA-BINDING PROTEIN HFQ"/>
    <property type="match status" value="1"/>
</dbReference>
<dbReference type="Pfam" id="PF17209">
    <property type="entry name" value="Hfq"/>
    <property type="match status" value="1"/>
</dbReference>
<dbReference type="SUPFAM" id="SSF50182">
    <property type="entry name" value="Sm-like ribonucleoproteins"/>
    <property type="match status" value="1"/>
</dbReference>
<dbReference type="PROSITE" id="PS52002">
    <property type="entry name" value="SM"/>
    <property type="match status" value="1"/>
</dbReference>
<comment type="function">
    <text evidence="1">RNA chaperone that binds small regulatory RNA (sRNAs) and mRNAs to facilitate mRNA translational regulation in response to envelope stress, environmental stress and changes in metabolite concentrations. Also binds with high specificity to tRNAs.</text>
</comment>
<comment type="subunit">
    <text evidence="1">Homohexamer.</text>
</comment>
<comment type="similarity">
    <text evidence="1">Belongs to the Hfq family.</text>
</comment>
<sequence length="77" mass="8807">MKATVNIQDQFLNQLRKESIPVTVFLLNGFQLRGQVKGFDNFTVIVETEGRQQLVYKHAISTFAPQKNVQLKNEAEV</sequence>
<keyword id="KW-1185">Reference proteome</keyword>
<keyword id="KW-0694">RNA-binding</keyword>
<keyword id="KW-0346">Stress response</keyword>
<feature type="chain" id="PRO_0000095620" description="RNA-binding protein Hfq">
    <location>
        <begin position="1"/>
        <end position="77"/>
    </location>
</feature>
<feature type="domain" description="Sm" evidence="2">
    <location>
        <begin position="9"/>
        <end position="69"/>
    </location>
</feature>
<accession>Q5WFY7</accession>
<proteinExistence type="inferred from homology"/>
<name>HFQ_SHOC1</name>